<geneLocation type="chloroplast"/>
<sequence length="81" mass="8004">MNPIISAASVIAAGLAVGLASIGPGVGQGTAAGQALEGIARQPEAEGKIRGTLLLSLAFMEALTIYGLVVALALLFANPFV</sequence>
<evidence type="ECO:0000255" key="1">
    <source>
        <dbReference type="HAMAP-Rule" id="MF_01396"/>
    </source>
</evidence>
<keyword id="KW-0066">ATP synthesis</keyword>
<keyword id="KW-0138">CF(0)</keyword>
<keyword id="KW-0150">Chloroplast</keyword>
<keyword id="KW-0375">Hydrogen ion transport</keyword>
<keyword id="KW-0406">Ion transport</keyword>
<keyword id="KW-0446">Lipid-binding</keyword>
<keyword id="KW-0472">Membrane</keyword>
<keyword id="KW-0934">Plastid</keyword>
<keyword id="KW-0793">Thylakoid</keyword>
<keyword id="KW-0812">Transmembrane</keyword>
<keyword id="KW-1133">Transmembrane helix</keyword>
<keyword id="KW-0813">Transport</keyword>
<comment type="function">
    <text evidence="1">F(1)F(0) ATP synthase produces ATP from ADP in the presence of a proton or sodium gradient. F-type ATPases consist of two structural domains, F(1) containing the extramembraneous catalytic core and F(0) containing the membrane proton channel, linked together by a central stalk and a peripheral stalk. During catalysis, ATP synthesis in the catalytic domain of F(1) is coupled via a rotary mechanism of the central stalk subunits to proton translocation.</text>
</comment>
<comment type="function">
    <text evidence="1">Key component of the F(0) channel; it plays a direct role in translocation across the membrane. A homomeric c-ring of between 10-14 subunits forms the central stalk rotor element with the F(1) delta and epsilon subunits.</text>
</comment>
<comment type="subunit">
    <text evidence="1">F-type ATPases have 2 components, F(1) - the catalytic core - and F(0) - the membrane proton channel. F(1) has five subunits: alpha(3), beta(3), gamma(1), delta(1), epsilon(1). F(0) has four main subunits: a(1), b(1), b'(1) and c(10-14). The alpha and beta chains form an alternating ring which encloses part of the gamma chain. F(1) is attached to F(0) by a central stalk formed by the gamma and epsilon chains, while a peripheral stalk is formed by the delta, b and b' chains.</text>
</comment>
<comment type="subcellular location">
    <subcellularLocation>
        <location evidence="1">Plastid</location>
        <location evidence="1">Chloroplast thylakoid membrane</location>
        <topology evidence="1">Multi-pass membrane protein</topology>
    </subcellularLocation>
</comment>
<comment type="miscellaneous">
    <text>In plastids the F-type ATPase is also known as CF(1)CF(0).</text>
</comment>
<comment type="similarity">
    <text evidence="1">Belongs to the ATPase C chain family.</text>
</comment>
<feature type="chain" id="PRO_0000362917" description="ATP synthase subunit c, chloroplastic">
    <location>
        <begin position="1"/>
        <end position="81"/>
    </location>
</feature>
<feature type="transmembrane region" description="Helical" evidence="1">
    <location>
        <begin position="3"/>
        <end position="23"/>
    </location>
</feature>
<feature type="transmembrane region" description="Helical" evidence="1">
    <location>
        <begin position="57"/>
        <end position="77"/>
    </location>
</feature>
<feature type="site" description="Reversibly protonated during proton transport" evidence="1">
    <location>
        <position position="61"/>
    </location>
</feature>
<proteinExistence type="inferred from homology"/>
<name>ATPH_GNEPA</name>
<protein>
    <recommendedName>
        <fullName evidence="1">ATP synthase subunit c, chloroplastic</fullName>
    </recommendedName>
    <alternativeName>
        <fullName evidence="1">ATP synthase F(0) sector subunit c</fullName>
    </alternativeName>
    <alternativeName>
        <fullName evidence="1">ATPase subunit III</fullName>
    </alternativeName>
    <alternativeName>
        <fullName evidence="1">F-type ATPase subunit c</fullName>
        <shortName evidence="1">F-ATPase subunit c</shortName>
    </alternativeName>
    <alternativeName>
        <fullName evidence="1">Lipid-binding protein</fullName>
    </alternativeName>
</protein>
<dbReference type="EMBL" id="AB295908">
    <property type="protein sequence ID" value="BAF64857.1"/>
    <property type="molecule type" value="Genomic_DNA"/>
</dbReference>
<dbReference type="EMBL" id="AP009569">
    <property type="protein sequence ID" value="BAH11293.1"/>
    <property type="molecule type" value="Genomic_DNA"/>
</dbReference>
<dbReference type="RefSeq" id="YP_002519782.1">
    <property type="nucleotide sequence ID" value="NC_011942.1"/>
</dbReference>
<dbReference type="SMR" id="A6BM12"/>
<dbReference type="GeneID" id="7368223"/>
<dbReference type="GO" id="GO:0009535">
    <property type="term" value="C:chloroplast thylakoid membrane"/>
    <property type="evidence" value="ECO:0007669"/>
    <property type="project" value="UniProtKB-SubCell"/>
</dbReference>
<dbReference type="GO" id="GO:0045259">
    <property type="term" value="C:proton-transporting ATP synthase complex"/>
    <property type="evidence" value="ECO:0007669"/>
    <property type="project" value="UniProtKB-KW"/>
</dbReference>
<dbReference type="GO" id="GO:0033177">
    <property type="term" value="C:proton-transporting two-sector ATPase complex, proton-transporting domain"/>
    <property type="evidence" value="ECO:0007669"/>
    <property type="project" value="InterPro"/>
</dbReference>
<dbReference type="GO" id="GO:0008289">
    <property type="term" value="F:lipid binding"/>
    <property type="evidence" value="ECO:0007669"/>
    <property type="project" value="UniProtKB-KW"/>
</dbReference>
<dbReference type="GO" id="GO:0046933">
    <property type="term" value="F:proton-transporting ATP synthase activity, rotational mechanism"/>
    <property type="evidence" value="ECO:0007669"/>
    <property type="project" value="UniProtKB-UniRule"/>
</dbReference>
<dbReference type="CDD" id="cd18183">
    <property type="entry name" value="ATP-synt_Fo_c_ATPH"/>
    <property type="match status" value="1"/>
</dbReference>
<dbReference type="FunFam" id="1.20.20.10:FF:000001">
    <property type="entry name" value="ATP synthase subunit c, chloroplastic"/>
    <property type="match status" value="1"/>
</dbReference>
<dbReference type="Gene3D" id="1.20.20.10">
    <property type="entry name" value="F1F0 ATP synthase subunit C"/>
    <property type="match status" value="1"/>
</dbReference>
<dbReference type="HAMAP" id="MF_01396">
    <property type="entry name" value="ATP_synth_c_bact"/>
    <property type="match status" value="1"/>
</dbReference>
<dbReference type="InterPro" id="IPR005953">
    <property type="entry name" value="ATP_synth_csu_bac/chlpt"/>
</dbReference>
<dbReference type="InterPro" id="IPR000454">
    <property type="entry name" value="ATP_synth_F0_csu"/>
</dbReference>
<dbReference type="InterPro" id="IPR020537">
    <property type="entry name" value="ATP_synth_F0_csu_DDCD_BS"/>
</dbReference>
<dbReference type="InterPro" id="IPR038662">
    <property type="entry name" value="ATP_synth_F0_csu_sf"/>
</dbReference>
<dbReference type="InterPro" id="IPR002379">
    <property type="entry name" value="ATPase_proteolipid_c-like_dom"/>
</dbReference>
<dbReference type="InterPro" id="IPR035921">
    <property type="entry name" value="F/V-ATP_Csub_sf"/>
</dbReference>
<dbReference type="NCBIfam" id="TIGR01260">
    <property type="entry name" value="ATP_synt_c"/>
    <property type="match status" value="1"/>
</dbReference>
<dbReference type="NCBIfam" id="NF005608">
    <property type="entry name" value="PRK07354.1"/>
    <property type="match status" value="1"/>
</dbReference>
<dbReference type="PANTHER" id="PTHR10031">
    <property type="entry name" value="ATP SYNTHASE LIPID-BINDING PROTEIN, MITOCHONDRIAL"/>
    <property type="match status" value="1"/>
</dbReference>
<dbReference type="PANTHER" id="PTHR10031:SF0">
    <property type="entry name" value="ATPASE PROTEIN 9"/>
    <property type="match status" value="1"/>
</dbReference>
<dbReference type="Pfam" id="PF00137">
    <property type="entry name" value="ATP-synt_C"/>
    <property type="match status" value="1"/>
</dbReference>
<dbReference type="PRINTS" id="PR00124">
    <property type="entry name" value="ATPASEC"/>
</dbReference>
<dbReference type="SUPFAM" id="SSF81333">
    <property type="entry name" value="F1F0 ATP synthase subunit C"/>
    <property type="match status" value="1"/>
</dbReference>
<dbReference type="PROSITE" id="PS00605">
    <property type="entry name" value="ATPASE_C"/>
    <property type="match status" value="1"/>
</dbReference>
<gene>
    <name evidence="1" type="primary">atpH</name>
</gene>
<accession>A6BM12</accession>
<accession>B7ZIB3</accession>
<organism>
    <name type="scientific">Gnetum parvifolium</name>
    <name type="common">Small-leaved jointfir</name>
    <name type="synonym">Gnetum scandens var. parvifolium</name>
    <dbReference type="NCBI Taxonomy" id="33153"/>
    <lineage>
        <taxon>Eukaryota</taxon>
        <taxon>Viridiplantae</taxon>
        <taxon>Streptophyta</taxon>
        <taxon>Embryophyta</taxon>
        <taxon>Tracheophyta</taxon>
        <taxon>Spermatophyta</taxon>
        <taxon>Gnetopsida</taxon>
        <taxon>Gnetidae</taxon>
        <taxon>Gnetales</taxon>
        <taxon>Gnetaceae</taxon>
        <taxon>Gnetum</taxon>
    </lineage>
</organism>
<reference key="1">
    <citation type="journal article" date="2007" name="Mol. Biol. Evol.">
        <title>Chloroplast genome (cpDNA) of Cycas taitungensis and 56 cp protein-coding genes of Gnetum parvifolium: insights into cpDNA evolution and phylogeny of extant seed plants.</title>
        <authorList>
            <person name="Wu C.-S."/>
            <person name="Wang Y.-N."/>
            <person name="Liu S.-M."/>
            <person name="Chaw S.-M."/>
        </authorList>
    </citation>
    <scope>NUCLEOTIDE SEQUENCE [LARGE SCALE GENOMIC DNA]</scope>
</reference>
<reference key="2">
    <citation type="journal article" date="2009" name="Mol. Phylogenet. Evol.">
        <title>Evolution of reduced and compact chloroplast genomes (cpDNAs) in gnetophytes: Selection toward a lower-cost strategy.</title>
        <authorList>
            <person name="Wu C.-S."/>
            <person name="Lai Y.-T."/>
            <person name="Lin C.-P."/>
            <person name="Wang Y.-N."/>
            <person name="Chaw S.-M."/>
        </authorList>
    </citation>
    <scope>NUCLEOTIDE SEQUENCE [LARGE SCALE GENOMIC DNA]</scope>
</reference>